<proteinExistence type="inferred from homology"/>
<dbReference type="EMBL" id="U34858">
    <property type="protein sequence ID" value="AAC52561.1"/>
    <property type="molecule type" value="Genomic_DNA"/>
</dbReference>
<dbReference type="SMR" id="Q34501"/>
<dbReference type="GO" id="GO:0005743">
    <property type="term" value="C:mitochondrial inner membrane"/>
    <property type="evidence" value="ECO:0007669"/>
    <property type="project" value="UniProtKB-SubCell"/>
</dbReference>
<dbReference type="GO" id="GO:0045275">
    <property type="term" value="C:respiratory chain complex III"/>
    <property type="evidence" value="ECO:0007669"/>
    <property type="project" value="InterPro"/>
</dbReference>
<dbReference type="GO" id="GO:0046872">
    <property type="term" value="F:metal ion binding"/>
    <property type="evidence" value="ECO:0007669"/>
    <property type="project" value="UniProtKB-KW"/>
</dbReference>
<dbReference type="GO" id="GO:0008121">
    <property type="term" value="F:ubiquinol-cytochrome-c reductase activity"/>
    <property type="evidence" value="ECO:0007669"/>
    <property type="project" value="InterPro"/>
</dbReference>
<dbReference type="GO" id="GO:0006122">
    <property type="term" value="P:mitochondrial electron transport, ubiquinol to cytochrome c"/>
    <property type="evidence" value="ECO:0007669"/>
    <property type="project" value="TreeGrafter"/>
</dbReference>
<dbReference type="CDD" id="cd00290">
    <property type="entry name" value="cytochrome_b_C"/>
    <property type="match status" value="1"/>
</dbReference>
<dbReference type="CDD" id="cd00284">
    <property type="entry name" value="Cytochrome_b_N"/>
    <property type="match status" value="1"/>
</dbReference>
<dbReference type="FunFam" id="1.20.810.10:FF:000002">
    <property type="entry name" value="Cytochrome b"/>
    <property type="match status" value="1"/>
</dbReference>
<dbReference type="Gene3D" id="1.20.810.10">
    <property type="entry name" value="Cytochrome Bc1 Complex, Chain C"/>
    <property type="match status" value="1"/>
</dbReference>
<dbReference type="InterPro" id="IPR005798">
    <property type="entry name" value="Cyt_b/b6_C"/>
</dbReference>
<dbReference type="InterPro" id="IPR036150">
    <property type="entry name" value="Cyt_b/b6_C_sf"/>
</dbReference>
<dbReference type="InterPro" id="IPR005797">
    <property type="entry name" value="Cyt_b/b6_N"/>
</dbReference>
<dbReference type="InterPro" id="IPR027387">
    <property type="entry name" value="Cytb/b6-like_sf"/>
</dbReference>
<dbReference type="InterPro" id="IPR030689">
    <property type="entry name" value="Cytochrome_b"/>
</dbReference>
<dbReference type="InterPro" id="IPR048260">
    <property type="entry name" value="Cytochrome_b_C_euk/bac"/>
</dbReference>
<dbReference type="InterPro" id="IPR048259">
    <property type="entry name" value="Cytochrome_b_N_euk/bac"/>
</dbReference>
<dbReference type="InterPro" id="IPR016174">
    <property type="entry name" value="Di-haem_cyt_TM"/>
</dbReference>
<dbReference type="PANTHER" id="PTHR19271">
    <property type="entry name" value="CYTOCHROME B"/>
    <property type="match status" value="1"/>
</dbReference>
<dbReference type="PANTHER" id="PTHR19271:SF16">
    <property type="entry name" value="CYTOCHROME B"/>
    <property type="match status" value="1"/>
</dbReference>
<dbReference type="Pfam" id="PF00032">
    <property type="entry name" value="Cytochrom_B_C"/>
    <property type="match status" value="1"/>
</dbReference>
<dbReference type="Pfam" id="PF00033">
    <property type="entry name" value="Cytochrome_B"/>
    <property type="match status" value="1"/>
</dbReference>
<dbReference type="PIRSF" id="PIRSF038885">
    <property type="entry name" value="COB"/>
    <property type="match status" value="1"/>
</dbReference>
<dbReference type="SUPFAM" id="SSF81648">
    <property type="entry name" value="a domain/subunit of cytochrome bc1 complex (Ubiquinol-cytochrome c reductase)"/>
    <property type="match status" value="1"/>
</dbReference>
<dbReference type="SUPFAM" id="SSF81342">
    <property type="entry name" value="Transmembrane di-heme cytochromes"/>
    <property type="match status" value="1"/>
</dbReference>
<dbReference type="PROSITE" id="PS51003">
    <property type="entry name" value="CYTB_CTER"/>
    <property type="match status" value="1"/>
</dbReference>
<dbReference type="PROSITE" id="PS51002">
    <property type="entry name" value="CYTB_NTER"/>
    <property type="match status" value="1"/>
</dbReference>
<name>CYB_EURSP</name>
<gene>
    <name type="primary">MT-CYB</name>
    <name type="synonym">COB</name>
    <name type="synonym">CYTB</name>
    <name type="synonym">MTCYB</name>
</gene>
<feature type="chain" id="PRO_0000255055" description="Cytochrome b">
    <location>
        <begin position="1"/>
        <end position="379"/>
    </location>
</feature>
<feature type="transmembrane region" description="Helical" evidence="2">
    <location>
        <begin position="33"/>
        <end position="53"/>
    </location>
</feature>
<feature type="transmembrane region" description="Helical" evidence="2">
    <location>
        <begin position="77"/>
        <end position="98"/>
    </location>
</feature>
<feature type="transmembrane region" description="Helical" evidence="2">
    <location>
        <begin position="113"/>
        <end position="133"/>
    </location>
</feature>
<feature type="transmembrane region" description="Helical" evidence="2">
    <location>
        <begin position="178"/>
        <end position="198"/>
    </location>
</feature>
<feature type="transmembrane region" description="Helical" evidence="2">
    <location>
        <begin position="226"/>
        <end position="246"/>
    </location>
</feature>
<feature type="transmembrane region" description="Helical" evidence="2">
    <location>
        <begin position="288"/>
        <end position="308"/>
    </location>
</feature>
<feature type="transmembrane region" description="Helical" evidence="2">
    <location>
        <begin position="320"/>
        <end position="340"/>
    </location>
</feature>
<feature type="transmembrane region" description="Helical" evidence="2">
    <location>
        <begin position="347"/>
        <end position="367"/>
    </location>
</feature>
<feature type="binding site" description="axial binding residue" evidence="2">
    <location>
        <position position="83"/>
    </location>
    <ligand>
        <name>heme b</name>
        <dbReference type="ChEBI" id="CHEBI:60344"/>
        <label>b562</label>
    </ligand>
    <ligandPart>
        <name>Fe</name>
        <dbReference type="ChEBI" id="CHEBI:18248"/>
    </ligandPart>
</feature>
<feature type="binding site" description="axial binding residue" evidence="2">
    <location>
        <position position="97"/>
    </location>
    <ligand>
        <name>heme b</name>
        <dbReference type="ChEBI" id="CHEBI:60344"/>
        <label>b566</label>
    </ligand>
    <ligandPart>
        <name>Fe</name>
        <dbReference type="ChEBI" id="CHEBI:18248"/>
    </ligandPart>
</feature>
<feature type="binding site" description="axial binding residue" evidence="2">
    <location>
        <position position="182"/>
    </location>
    <ligand>
        <name>heme b</name>
        <dbReference type="ChEBI" id="CHEBI:60344"/>
        <label>b562</label>
    </ligand>
    <ligandPart>
        <name>Fe</name>
        <dbReference type="ChEBI" id="CHEBI:18248"/>
    </ligandPart>
</feature>
<feature type="binding site" description="axial binding residue" evidence="2">
    <location>
        <position position="196"/>
    </location>
    <ligand>
        <name>heme b</name>
        <dbReference type="ChEBI" id="CHEBI:60344"/>
        <label>b566</label>
    </ligand>
    <ligandPart>
        <name>Fe</name>
        <dbReference type="ChEBI" id="CHEBI:18248"/>
    </ligandPart>
</feature>
<feature type="binding site" evidence="2">
    <location>
        <position position="201"/>
    </location>
    <ligand>
        <name>a ubiquinone</name>
        <dbReference type="ChEBI" id="CHEBI:16389"/>
    </ligand>
</feature>
<comment type="function">
    <text evidence="2">Component of the ubiquinol-cytochrome c reductase complex (complex III or cytochrome b-c1 complex) that is part of the mitochondrial respiratory chain. The b-c1 complex mediates electron transfer from ubiquinol to cytochrome c. Contributes to the generation of a proton gradient across the mitochondrial membrane that is then used for ATP synthesis.</text>
</comment>
<comment type="cofactor">
    <cofactor evidence="2">
        <name>heme b</name>
        <dbReference type="ChEBI" id="CHEBI:60344"/>
    </cofactor>
    <text evidence="2">Binds 2 heme b groups non-covalently.</text>
</comment>
<comment type="subunit">
    <text evidence="2">The cytochrome bc1 complex contains 11 subunits: 3 respiratory subunits (MT-CYB, CYC1 and UQCRFS1), 2 core proteins (UQCRC1 and UQCRC2) and 6 low-molecular weight proteins (UQCRH/QCR6, UQCRB/QCR7, UQCRQ/QCR8, UQCR10/QCR9, UQCR11/QCR10 and a cleavage product of UQCRFS1). This cytochrome bc1 complex then forms a dimer.</text>
</comment>
<comment type="subcellular location">
    <subcellularLocation>
        <location evidence="2">Mitochondrion inner membrane</location>
        <topology evidence="2">Multi-pass membrane protein</topology>
    </subcellularLocation>
</comment>
<comment type="miscellaneous">
    <text evidence="1">Heme 1 (or BL or b562) is low-potential and absorbs at about 562 nm, and heme 2 (or BH or b566) is high-potential and absorbs at about 566 nm.</text>
</comment>
<comment type="similarity">
    <text evidence="3 4">Belongs to the cytochrome b family.</text>
</comment>
<comment type="caution">
    <text evidence="2">The full-length protein contains only eight transmembrane helices, not nine as predicted by bioinformatics tools.</text>
</comment>
<evidence type="ECO:0000250" key="1"/>
<evidence type="ECO:0000250" key="2">
    <source>
        <dbReference type="UniProtKB" id="P00157"/>
    </source>
</evidence>
<evidence type="ECO:0000255" key="3">
    <source>
        <dbReference type="PROSITE-ProRule" id="PRU00967"/>
    </source>
</evidence>
<evidence type="ECO:0000255" key="4">
    <source>
        <dbReference type="PROSITE-ProRule" id="PRU00968"/>
    </source>
</evidence>
<keyword id="KW-0249">Electron transport</keyword>
<keyword id="KW-0349">Heme</keyword>
<keyword id="KW-0408">Iron</keyword>
<keyword id="KW-0472">Membrane</keyword>
<keyword id="KW-0479">Metal-binding</keyword>
<keyword id="KW-0496">Mitochondrion</keyword>
<keyword id="KW-0999">Mitochondrion inner membrane</keyword>
<keyword id="KW-0679">Respiratory chain</keyword>
<keyword id="KW-0812">Transmembrane</keyword>
<keyword id="KW-1133">Transmembrane helix</keyword>
<keyword id="KW-0813">Transport</keyword>
<keyword id="KW-0830">Ubiquinone</keyword>
<reference key="1">
    <citation type="journal article" date="1996" name="Mol. Phylogenet. Evol.">
        <title>The simultaneous diversification of South American echimyid rodents (Hystricognathi) based on complete cytochrome b sequences.</title>
        <authorList>
            <person name="Lara M.C."/>
            <person name="Patton J.L."/>
            <person name="da Silva M.N.F."/>
        </authorList>
    </citation>
    <scope>NUCLEOTIDE SEQUENCE [GENOMIC DNA]</scope>
</reference>
<protein>
    <recommendedName>
        <fullName>Cytochrome b</fullName>
    </recommendedName>
    <alternativeName>
        <fullName>Complex III subunit 3</fullName>
    </alternativeName>
    <alternativeName>
        <fullName>Complex III subunit III</fullName>
    </alternativeName>
    <alternativeName>
        <fullName>Cytochrome b-c1 complex subunit 3</fullName>
    </alternativeName>
    <alternativeName>
        <fullName>Ubiquinol-cytochrome-c reductase complex cytochrome b subunit</fullName>
    </alternativeName>
</protein>
<sequence>MTNTRKNHPLIKIINHSFIDLPAPSNISAWWNFGSLLGVCLALQIITGLFLAMHYTADTTTAFSSVTHICRDVNYGWLIRYAHANGASMFFIFLYFHIGRGIYYGSYTFMETWNIGVILLFMVMATAFMGYVLPWGQMSFWGATVITNLLSAIPYIGPTLVEWIWGGFSVDKATLTRFFAFHFILPFIITAMVMIHLLFLHESGSNNPSGLNSDSDKIPFHPYYTIKDILGLLLMILTLLMLILFSPDLLGDPDNYTPANPLNTPPHIKPEWYFLFAYAILRSIPNKLGGVLALVLSILILMLFPALHTAKQRSMTFRPMSQCLLWILVANLIILTWIGGQPVEYPFITIGQLASISYFCIILILMPMTSLMENHLLKW</sequence>
<geneLocation type="mitochondrion"/>
<accession>Q34501</accession>
<organism>
    <name type="scientific">Euryzygomatomys spinosus</name>
    <name type="common">Guiara</name>
    <name type="synonym">Euryzygomatomys guiara</name>
    <dbReference type="NCBI Taxonomy" id="43325"/>
    <lineage>
        <taxon>Eukaryota</taxon>
        <taxon>Metazoa</taxon>
        <taxon>Chordata</taxon>
        <taxon>Craniata</taxon>
        <taxon>Vertebrata</taxon>
        <taxon>Euteleostomi</taxon>
        <taxon>Mammalia</taxon>
        <taxon>Eutheria</taxon>
        <taxon>Euarchontoglires</taxon>
        <taxon>Glires</taxon>
        <taxon>Rodentia</taxon>
        <taxon>Hystricomorpha</taxon>
        <taxon>Echimyidae</taxon>
        <taxon>Euryzygomatomys</taxon>
    </lineage>
</organism>